<evidence type="ECO:0000255" key="1"/>
<evidence type="ECO:0000256" key="2">
    <source>
        <dbReference type="SAM" id="MobiDB-lite"/>
    </source>
</evidence>
<evidence type="ECO:0000305" key="3"/>
<gene>
    <name type="ordered locus">SA1813</name>
</gene>
<keyword id="KW-0732">Signal</keyword>
<feature type="signal peptide" evidence="1">
    <location>
        <begin position="1"/>
        <end position="27"/>
    </location>
</feature>
<feature type="chain" id="PRO_0000298645" description="Uncharacterized leukocidin-like protein 2">
    <location>
        <begin position="28"/>
        <end position="351"/>
    </location>
</feature>
<feature type="region of interest" description="Disordered" evidence="2">
    <location>
        <begin position="28"/>
        <end position="71"/>
    </location>
</feature>
<feature type="compositionally biased region" description="Basic and acidic residues" evidence="2">
    <location>
        <begin position="30"/>
        <end position="60"/>
    </location>
</feature>
<proteinExistence type="evidence at protein level"/>
<accession>Q99SN7</accession>
<organism>
    <name type="scientific">Staphylococcus aureus (strain N315)</name>
    <dbReference type="NCBI Taxonomy" id="158879"/>
    <lineage>
        <taxon>Bacteria</taxon>
        <taxon>Bacillati</taxon>
        <taxon>Bacillota</taxon>
        <taxon>Bacilli</taxon>
        <taxon>Bacillales</taxon>
        <taxon>Staphylococcaceae</taxon>
        <taxon>Staphylococcus</taxon>
    </lineage>
</organism>
<sequence length="351" mass="40462">MKNKKRVLIASSLSCAILLLSAATTQANSAHKDSQDQNKKEHVDKSQQKDKRNVTNKDKNSTVPDDIGKNGKITKRTETVYDEKTNILQNLQFDFIDDPTYDKNVLLVKKQGSIHSNLKFESHKEEKNSNWLKYPSEYHVDFQVKRNRKTEILDQLPKNKISTAKVDSTFSYSSGGKFDSTKGIGRTSSNSYSKTISYNQQNYDTIASGKNNNWHVHWSVIANDLKYGGEVKNRNDELLFYRNTRIATVENPELSFASKYRYPALVRSGFNPEFLTYLSNEKSNEKTQFEVTYTRNQDILKNRPGIHYAPPILEKNKDGQRLIVTYEVDWKNKTVKVVDKYSDDNKPYKEG</sequence>
<name>LUKL2_STAAN</name>
<reference key="1">
    <citation type="journal article" date="2001" name="Lancet">
        <title>Whole genome sequencing of meticillin-resistant Staphylococcus aureus.</title>
        <authorList>
            <person name="Kuroda M."/>
            <person name="Ohta T."/>
            <person name="Uchiyama I."/>
            <person name="Baba T."/>
            <person name="Yuzawa H."/>
            <person name="Kobayashi I."/>
            <person name="Cui L."/>
            <person name="Oguchi A."/>
            <person name="Aoki K."/>
            <person name="Nagai Y."/>
            <person name="Lian J.-Q."/>
            <person name="Ito T."/>
            <person name="Kanamori M."/>
            <person name="Matsumaru H."/>
            <person name="Maruyama A."/>
            <person name="Murakami H."/>
            <person name="Hosoyama A."/>
            <person name="Mizutani-Ui Y."/>
            <person name="Takahashi N.K."/>
            <person name="Sawano T."/>
            <person name="Inoue R."/>
            <person name="Kaito C."/>
            <person name="Sekimizu K."/>
            <person name="Hirakawa H."/>
            <person name="Kuhara S."/>
            <person name="Goto S."/>
            <person name="Yabuzaki J."/>
            <person name="Kanehisa M."/>
            <person name="Yamashita A."/>
            <person name="Oshima K."/>
            <person name="Furuya K."/>
            <person name="Yoshino C."/>
            <person name="Shiba T."/>
            <person name="Hattori M."/>
            <person name="Ogasawara N."/>
            <person name="Hayashi H."/>
            <person name="Hiramatsu K."/>
        </authorList>
    </citation>
    <scope>NUCLEOTIDE SEQUENCE [LARGE SCALE GENOMIC DNA]</scope>
    <source>
        <strain>N315</strain>
    </source>
</reference>
<reference key="2">
    <citation type="submission" date="2007-10" db="UniProtKB">
        <title>Shotgun proteomic analysis of total and membrane protein extracts of S. aureus strain N315.</title>
        <authorList>
            <person name="Vaezzadeh A.R."/>
            <person name="Deshusses J."/>
            <person name="Lescuyer P."/>
            <person name="Hochstrasser D.F."/>
        </authorList>
    </citation>
    <scope>IDENTIFICATION BY MASS SPECTROMETRY [LARGE SCALE ANALYSIS]</scope>
    <source>
        <strain>N315</strain>
    </source>
</reference>
<dbReference type="EMBL" id="BA000018">
    <property type="protein sequence ID" value="BAB43093.1"/>
    <property type="molecule type" value="Genomic_DNA"/>
</dbReference>
<dbReference type="PIR" id="D89991">
    <property type="entry name" value="D89991"/>
</dbReference>
<dbReference type="SMR" id="Q99SN7"/>
<dbReference type="EnsemblBacteria" id="BAB43093">
    <property type="protein sequence ID" value="BAB43093"/>
    <property type="gene ID" value="BAB43093"/>
</dbReference>
<dbReference type="KEGG" id="sau:SA1813"/>
<dbReference type="HOGENOM" id="CLU_865755_0_0_9"/>
<dbReference type="GO" id="GO:0005576">
    <property type="term" value="C:extracellular region"/>
    <property type="evidence" value="ECO:0007669"/>
    <property type="project" value="InterPro"/>
</dbReference>
<dbReference type="GO" id="GO:0051715">
    <property type="term" value="P:cytolysis in another organism"/>
    <property type="evidence" value="ECO:0007669"/>
    <property type="project" value="InterPro"/>
</dbReference>
<dbReference type="Gene3D" id="2.70.240.10">
    <property type="entry name" value="Leukocidin/porin MspA"/>
    <property type="match status" value="1"/>
</dbReference>
<dbReference type="InterPro" id="IPR003963">
    <property type="entry name" value="Bi-component_toxin_staph"/>
</dbReference>
<dbReference type="InterPro" id="IPR016183">
    <property type="entry name" value="Leukocidin/Hemolysin_toxin"/>
</dbReference>
<dbReference type="InterPro" id="IPR036435">
    <property type="entry name" value="Leukocidin/porin_MspA_sf"/>
</dbReference>
<dbReference type="Pfam" id="PF07968">
    <property type="entry name" value="Leukocidin"/>
    <property type="match status" value="1"/>
</dbReference>
<dbReference type="PRINTS" id="PR01468">
    <property type="entry name" value="BICOMPNTOXIN"/>
</dbReference>
<dbReference type="SUPFAM" id="SSF56959">
    <property type="entry name" value="Leukocidin-like"/>
    <property type="match status" value="1"/>
</dbReference>
<comment type="similarity">
    <text evidence="3">Belongs to the aerolysin family.</text>
</comment>
<protein>
    <recommendedName>
        <fullName>Uncharacterized leukocidin-like protein 2</fullName>
    </recommendedName>
</protein>